<keyword id="KW-0963">Cytoplasm</keyword>
<keyword id="KW-1185">Reference proteome</keyword>
<sequence>MAKNKKQNGKAKTPPVVAAAAGEQKETIGNGHAEQNGLNGHASSEESDPAAAGPNESADDKSAGVAGGGETEQQQQQQEDDVMRLMQETGFTVQVLSPGVEPLSIQVSSMELVQEIHQLLMDREDTCHRTCFSLQLDGRTLDNFAELKNIDGLQEGSVIRVVEEPYTMREARIHVRHVRDLLKSLDPADAYNGVDCSSLTFLHTITMGDIMEKKKTRQESVDCTPPDFIMPGARERPLLPLQPGTGKKGTPQPLKVLTTSAWNPPPGPRKLHGDLMYLYVVTMEDKRLHISACSRGFYVNQSTDDAFNPQPANPSYLSHSLIDLLSQISATFRRCFAQMQKKRTQRHPFERVATPYQVYTWTAPALEHTIDAIRAEDTFSSKLGYEEHIPGQTRDWNEELQTTRELPRATLPERLLRERAIFKVHSDFVTAATRGAMAVIDGNVMPINPGEDAKTQMFIWNNIFFSLGFDVRDHYKELGGDAAAFVAPRNDLHGVRVYSAVDVEGLYTLGTVVIDYRGYRVTAQSIIPGILEREQDQSVVYGSIDFGKTVLSHPKYLELLNAAGKHLKILPHSVYNDKEEAIELCSSVECKGIIGNDGRHYILDLLRTFPPDVNFLALPAEEEAVGKESRAMGFPIEHRHKLCCLRQELLEAFVENRYLMFMKHAAVQLQQCVKMKQEQKAAAAQKTEEGGKQAAIEAAAPAEGDKTPAKDAKDGKEAGKDANDGKEEGSTTKEAAAAAAAARSVPKPDSEDAKKLVESLISSDQKNESMEVVKRACEAVGSLKEYEFNIRFNPDVYSPGIRHVDEEPNAAGSLRRQKQLVKDAAEFLVKHQIPSFVHECLDHTSAPMDGVTLTELLHNRGINVRYLGKVVDQLAKIKQLEYLHTIAVSELIVRAAKHLFTAYLQQTDVMSMAAAISHFLNCFLTVSTGGYQPVANGTGADGDGQLADEFGPKAGGKKQNKQSKRGGGGGGGKGAAGGGRKATFSVPSSDNCEWTALTSKTLWAQIRQELKAYWDFELTVEQPAKEGKESKAAVIDSIEPLIGAFKLQKISLLRSFCLKTGVQILLQEYAFEQRNRPAFTDADIVNVFPVVKHINPRASDAYNFYTTGQTKIQQGYLQDGYGLISEALNLLNNVYGAMHPENAQCLRMLARLSYIMGDPQEALAIQQRAVLMSERVNGVDHPYTISEYGHLALYCFANSQITTALKLLYRARYLATIVCGENHPDIALMDSNISLILHAVGEYELSLRFLEHALALNIRYYGEKSLKVAVSYHLVARTQSCMGDFRSALVNEKETYAIYKQQLGENHEKTQESSECLRHLTQQAVVLQKKMNYANGKLLSTGLPPIHIQPPSMGSVLDMLNAINGIIFVQISSKEIANFKNEIEKRQKEAGAQSQQPGGGPVQANQEEVDQMLMETMQKTAAGIPFEEQDGEKKDGAAEAASHTAGGAAANTAAPAVSPRRKS</sequence>
<proteinExistence type="inferred from homology"/>
<dbReference type="EMBL" id="AAAB01008986">
    <property type="protein sequence ID" value="EAA00110.4"/>
    <property type="molecule type" value="Genomic_DNA"/>
</dbReference>
<dbReference type="RefSeq" id="XP_320668.4">
    <property type="nucleotide sequence ID" value="XM_320668.4"/>
</dbReference>
<dbReference type="SMR" id="Q7PZD5"/>
<dbReference type="FunCoup" id="Q7PZD5">
    <property type="interactions" value="1885"/>
</dbReference>
<dbReference type="STRING" id="7165.Q7PZD5"/>
<dbReference type="PaxDb" id="7165-AGAP011851-PA"/>
<dbReference type="KEGG" id="aga:1280801"/>
<dbReference type="CTD" id="1191"/>
<dbReference type="VEuPathDB" id="VectorBase:AGAMI1_010791"/>
<dbReference type="VEuPathDB" id="VectorBase:AGAP029760"/>
<dbReference type="eggNOG" id="KOG1839">
    <property type="taxonomic scope" value="Eukaryota"/>
</dbReference>
<dbReference type="HOGENOM" id="CLU_003256_1_0_1"/>
<dbReference type="InParanoid" id="Q7PZD5"/>
<dbReference type="OMA" id="HPVWDKD"/>
<dbReference type="PhylomeDB" id="Q7PZD5"/>
<dbReference type="Proteomes" id="UP000007062">
    <property type="component" value="Chromosome 3L"/>
</dbReference>
<dbReference type="GO" id="GO:0005737">
    <property type="term" value="C:cytoplasm"/>
    <property type="evidence" value="ECO:0000318"/>
    <property type="project" value="GO_Central"/>
</dbReference>
<dbReference type="GO" id="GO:0003729">
    <property type="term" value="F:mRNA binding"/>
    <property type="evidence" value="ECO:0000318"/>
    <property type="project" value="GO_Central"/>
</dbReference>
<dbReference type="GO" id="GO:0048312">
    <property type="term" value="P:intracellular distribution of mitochondria"/>
    <property type="evidence" value="ECO:0000318"/>
    <property type="project" value="GO_Central"/>
</dbReference>
<dbReference type="GO" id="GO:0007005">
    <property type="term" value="P:mitochondrion organization"/>
    <property type="evidence" value="ECO:0007669"/>
    <property type="project" value="UniProtKB-UniRule"/>
</dbReference>
<dbReference type="CDD" id="cd15466">
    <property type="entry name" value="CLU-central"/>
    <property type="match status" value="1"/>
</dbReference>
<dbReference type="FunFam" id="3.30.2280.10:FF:000001">
    <property type="entry name" value="Clustered mitochondria (CluA/CLU1) homolog"/>
    <property type="match status" value="1"/>
</dbReference>
<dbReference type="FunFam" id="1.25.40.10:FF:000099">
    <property type="entry name" value="Clustered mitochondria protein homolog"/>
    <property type="match status" value="1"/>
</dbReference>
<dbReference type="Gene3D" id="3.30.2280.10">
    <property type="entry name" value="Hypothetical protein (hspc210)"/>
    <property type="match status" value="1"/>
</dbReference>
<dbReference type="Gene3D" id="1.25.40.10">
    <property type="entry name" value="Tetratricopeptide repeat domain"/>
    <property type="match status" value="1"/>
</dbReference>
<dbReference type="HAMAP" id="MF_03013">
    <property type="entry name" value="CLU"/>
    <property type="match status" value="1"/>
</dbReference>
<dbReference type="InterPro" id="IPR033646">
    <property type="entry name" value="CLU-central"/>
</dbReference>
<dbReference type="InterPro" id="IPR025697">
    <property type="entry name" value="CLU_dom"/>
</dbReference>
<dbReference type="InterPro" id="IPR028275">
    <property type="entry name" value="CLU_N"/>
</dbReference>
<dbReference type="InterPro" id="IPR027523">
    <property type="entry name" value="CLU_prot"/>
</dbReference>
<dbReference type="InterPro" id="IPR023231">
    <property type="entry name" value="GSKIP_dom_sf"/>
</dbReference>
<dbReference type="InterPro" id="IPR011990">
    <property type="entry name" value="TPR-like_helical_dom_sf"/>
</dbReference>
<dbReference type="PANTHER" id="PTHR12601:SF6">
    <property type="entry name" value="CLUSTERED MITOCHONDRIA PROTEIN HOMOLOG"/>
    <property type="match status" value="1"/>
</dbReference>
<dbReference type="PANTHER" id="PTHR12601">
    <property type="entry name" value="EUKARYOTIC TRANSLATION INITIATION FACTOR 3 SUBUNIT EIF-3"/>
    <property type="match status" value="1"/>
</dbReference>
<dbReference type="Pfam" id="PF13236">
    <property type="entry name" value="CLU"/>
    <property type="match status" value="1"/>
</dbReference>
<dbReference type="Pfam" id="PF15044">
    <property type="entry name" value="CLU_N"/>
    <property type="match status" value="1"/>
</dbReference>
<dbReference type="Pfam" id="PF12807">
    <property type="entry name" value="eIF3_p135"/>
    <property type="match status" value="1"/>
</dbReference>
<dbReference type="Pfam" id="PF13374">
    <property type="entry name" value="TPR_10"/>
    <property type="match status" value="1"/>
</dbReference>
<dbReference type="Pfam" id="PF13424">
    <property type="entry name" value="TPR_12"/>
    <property type="match status" value="1"/>
</dbReference>
<dbReference type="SUPFAM" id="SSF103107">
    <property type="entry name" value="Hypothetical protein c14orf129, hspc210"/>
    <property type="match status" value="1"/>
</dbReference>
<dbReference type="SUPFAM" id="SSF48452">
    <property type="entry name" value="TPR-like"/>
    <property type="match status" value="2"/>
</dbReference>
<dbReference type="PROSITE" id="PS51823">
    <property type="entry name" value="CLU"/>
    <property type="match status" value="1"/>
</dbReference>
<reference key="1">
    <citation type="journal article" date="2002" name="Science">
        <title>The genome sequence of the malaria mosquito Anopheles gambiae.</title>
        <authorList>
            <person name="Holt R.A."/>
            <person name="Subramanian G.M."/>
            <person name="Halpern A."/>
            <person name="Sutton G.G."/>
            <person name="Charlab R."/>
            <person name="Nusskern D.R."/>
            <person name="Wincker P."/>
            <person name="Clark A.G."/>
            <person name="Ribeiro J.M.C."/>
            <person name="Wides R."/>
            <person name="Salzberg S.L."/>
            <person name="Loftus B.J."/>
            <person name="Yandell M.D."/>
            <person name="Majoros W.H."/>
            <person name="Rusch D.B."/>
            <person name="Lai Z."/>
            <person name="Kraft C.L."/>
            <person name="Abril J.F."/>
            <person name="Anthouard V."/>
            <person name="Arensburger P."/>
            <person name="Atkinson P.W."/>
            <person name="Baden H."/>
            <person name="de Berardinis V."/>
            <person name="Baldwin D."/>
            <person name="Benes V."/>
            <person name="Biedler J."/>
            <person name="Blass C."/>
            <person name="Bolanos R."/>
            <person name="Boscus D."/>
            <person name="Barnstead M."/>
            <person name="Cai S."/>
            <person name="Center A."/>
            <person name="Chaturverdi K."/>
            <person name="Christophides G.K."/>
            <person name="Chrystal M.A.M."/>
            <person name="Clamp M."/>
            <person name="Cravchik A."/>
            <person name="Curwen V."/>
            <person name="Dana A."/>
            <person name="Delcher A."/>
            <person name="Dew I."/>
            <person name="Evans C.A."/>
            <person name="Flanigan M."/>
            <person name="Grundschober-Freimoser A."/>
            <person name="Friedli L."/>
            <person name="Gu Z."/>
            <person name="Guan P."/>
            <person name="Guigo R."/>
            <person name="Hillenmeyer M.E."/>
            <person name="Hladun S.L."/>
            <person name="Hogan J.R."/>
            <person name="Hong Y.S."/>
            <person name="Hoover J."/>
            <person name="Jaillon O."/>
            <person name="Ke Z."/>
            <person name="Kodira C.D."/>
            <person name="Kokoza E."/>
            <person name="Koutsos A."/>
            <person name="Letunic I."/>
            <person name="Levitsky A.A."/>
            <person name="Liang Y."/>
            <person name="Lin J.-J."/>
            <person name="Lobo N.F."/>
            <person name="Lopez J.R."/>
            <person name="Malek J.A."/>
            <person name="McIntosh T.C."/>
            <person name="Meister S."/>
            <person name="Miller J.R."/>
            <person name="Mobarry C."/>
            <person name="Mongin E."/>
            <person name="Murphy S.D."/>
            <person name="O'Brochta D.A."/>
            <person name="Pfannkoch C."/>
            <person name="Qi R."/>
            <person name="Regier M.A."/>
            <person name="Remington K."/>
            <person name="Shao H."/>
            <person name="Sharakhova M.V."/>
            <person name="Sitter C.D."/>
            <person name="Shetty J."/>
            <person name="Smith T.J."/>
            <person name="Strong R."/>
            <person name="Sun J."/>
            <person name="Thomasova D."/>
            <person name="Ton L.Q."/>
            <person name="Topalis P."/>
            <person name="Tu Z.J."/>
            <person name="Unger M.F."/>
            <person name="Walenz B."/>
            <person name="Wang A.H."/>
            <person name="Wang J."/>
            <person name="Wang M."/>
            <person name="Wang X."/>
            <person name="Woodford K.J."/>
            <person name="Wortman J.R."/>
            <person name="Wu M."/>
            <person name="Yao A."/>
            <person name="Zdobnov E.M."/>
            <person name="Zhang H."/>
            <person name="Zhao Q."/>
            <person name="Zhao S."/>
            <person name="Zhu S.C."/>
            <person name="Zhimulev I."/>
            <person name="Coluzzi M."/>
            <person name="della Torre A."/>
            <person name="Roth C.W."/>
            <person name="Louis C."/>
            <person name="Kalush F."/>
            <person name="Mural R.J."/>
            <person name="Myers E.W."/>
            <person name="Adams M.D."/>
            <person name="Smith H.O."/>
            <person name="Broder S."/>
            <person name="Gardner M.J."/>
            <person name="Fraser C.M."/>
            <person name="Birney E."/>
            <person name="Bork P."/>
            <person name="Brey P.T."/>
            <person name="Venter J.C."/>
            <person name="Weissenbach J."/>
            <person name="Kafatos F.C."/>
            <person name="Collins F.H."/>
            <person name="Hoffman S.L."/>
        </authorList>
    </citation>
    <scope>NUCLEOTIDE SEQUENCE [LARGE SCALE GENOMIC DNA]</scope>
    <source>
        <strain>PEST</strain>
    </source>
</reference>
<feature type="chain" id="PRO_0000366377" description="Clustered mitochondria protein homolog">
    <location>
        <begin position="1"/>
        <end position="1463"/>
    </location>
</feature>
<feature type="domain" description="Clu" evidence="2">
    <location>
        <begin position="374"/>
        <end position="616"/>
    </location>
</feature>
<feature type="region of interest" description="Disordered" evidence="3">
    <location>
        <begin position="1"/>
        <end position="79"/>
    </location>
</feature>
<feature type="region of interest" description="Disordered" evidence="3">
    <location>
        <begin position="684"/>
        <end position="753"/>
    </location>
</feature>
<feature type="region of interest" description="Disordered" evidence="3">
    <location>
        <begin position="942"/>
        <end position="988"/>
    </location>
</feature>
<feature type="region of interest" description="Disordered" evidence="3">
    <location>
        <begin position="1387"/>
        <end position="1463"/>
    </location>
</feature>
<feature type="compositionally biased region" description="Low complexity" evidence="3">
    <location>
        <begin position="10"/>
        <end position="22"/>
    </location>
</feature>
<feature type="compositionally biased region" description="Low complexity" evidence="3">
    <location>
        <begin position="692"/>
        <end position="702"/>
    </location>
</feature>
<feature type="compositionally biased region" description="Basic and acidic residues" evidence="3">
    <location>
        <begin position="703"/>
        <end position="731"/>
    </location>
</feature>
<feature type="compositionally biased region" description="Basic residues" evidence="3">
    <location>
        <begin position="955"/>
        <end position="964"/>
    </location>
</feature>
<feature type="compositionally biased region" description="Gly residues" evidence="3">
    <location>
        <begin position="965"/>
        <end position="980"/>
    </location>
</feature>
<feature type="compositionally biased region" description="Low complexity" evidence="3">
    <location>
        <begin position="1438"/>
        <end position="1456"/>
    </location>
</feature>
<organism>
    <name type="scientific">Anopheles gambiae</name>
    <name type="common">African malaria mosquito</name>
    <dbReference type="NCBI Taxonomy" id="7165"/>
    <lineage>
        <taxon>Eukaryota</taxon>
        <taxon>Metazoa</taxon>
        <taxon>Ecdysozoa</taxon>
        <taxon>Arthropoda</taxon>
        <taxon>Hexapoda</taxon>
        <taxon>Insecta</taxon>
        <taxon>Pterygota</taxon>
        <taxon>Neoptera</taxon>
        <taxon>Endopterygota</taxon>
        <taxon>Diptera</taxon>
        <taxon>Nematocera</taxon>
        <taxon>Culicoidea</taxon>
        <taxon>Culicidae</taxon>
        <taxon>Anophelinae</taxon>
        <taxon>Anopheles</taxon>
    </lineage>
</organism>
<evidence type="ECO:0000255" key="1">
    <source>
        <dbReference type="HAMAP-Rule" id="MF_03013"/>
    </source>
</evidence>
<evidence type="ECO:0000255" key="2">
    <source>
        <dbReference type="PROSITE-ProRule" id="PRU01167"/>
    </source>
</evidence>
<evidence type="ECO:0000256" key="3">
    <source>
        <dbReference type="SAM" id="MobiDB-lite"/>
    </source>
</evidence>
<name>CLU_ANOGA</name>
<accession>Q7PZD5</accession>
<protein>
    <recommendedName>
        <fullName evidence="1">Clustered mitochondria protein homolog</fullName>
    </recommendedName>
</protein>
<comment type="function">
    <text evidence="1">mRNA-binding protein involved in proper cytoplasmic distribution of mitochondria.</text>
</comment>
<comment type="subcellular location">
    <subcellularLocation>
        <location evidence="1">Cytoplasm</location>
    </subcellularLocation>
</comment>
<comment type="similarity">
    <text evidence="1">Belongs to the CLU family.</text>
</comment>
<gene>
    <name type="ORF">AGAP011851</name>
</gene>